<protein>
    <recommendedName>
        <fullName evidence="1">Cobalamin biosynthesis protein CbiB</fullName>
    </recommendedName>
</protein>
<sequence>MTILAWCIAWVLDFIIGDPQHWPHPVRWIGRLITFVQRIVRRYCPGDKALRIGGGVMWVVVVGVTWGVAWGVLALAQRIHPWFGWSVEVWMIFTTLAGRSLARAAQEVERPLRENDLAESRIKLSWIVGRDTSQLQPAQIYRAVVETVAENTVDGIIAPLFFLFLGGAPLAMAYKAVNTLDSMVGYKHEKYRAIGMVSARMDDVANYLPARLSWLLLGIAAGLCRLSGWRALRIGWRDRYNHSSPNCAWSEACVAGALGIQLGGPNNYFGERVDKPWIGDAQRGISVDDISRTIRLMWVASTLALALFIAARCGLSGVA</sequence>
<reference key="1">
    <citation type="journal article" date="2001" name="Nature">
        <title>Complete genome sequence of a multiple drug resistant Salmonella enterica serovar Typhi CT18.</title>
        <authorList>
            <person name="Parkhill J."/>
            <person name="Dougan G."/>
            <person name="James K.D."/>
            <person name="Thomson N.R."/>
            <person name="Pickard D."/>
            <person name="Wain J."/>
            <person name="Churcher C.M."/>
            <person name="Mungall K.L."/>
            <person name="Bentley S.D."/>
            <person name="Holden M.T.G."/>
            <person name="Sebaihia M."/>
            <person name="Baker S."/>
            <person name="Basham D."/>
            <person name="Brooks K."/>
            <person name="Chillingworth T."/>
            <person name="Connerton P."/>
            <person name="Cronin A."/>
            <person name="Davis P."/>
            <person name="Davies R.M."/>
            <person name="Dowd L."/>
            <person name="White N."/>
            <person name="Farrar J."/>
            <person name="Feltwell T."/>
            <person name="Hamlin N."/>
            <person name="Haque A."/>
            <person name="Hien T.T."/>
            <person name="Holroyd S."/>
            <person name="Jagels K."/>
            <person name="Krogh A."/>
            <person name="Larsen T.S."/>
            <person name="Leather S."/>
            <person name="Moule S."/>
            <person name="O'Gaora P."/>
            <person name="Parry C."/>
            <person name="Quail M.A."/>
            <person name="Rutherford K.M."/>
            <person name="Simmonds M."/>
            <person name="Skelton J."/>
            <person name="Stevens K."/>
            <person name="Whitehead S."/>
            <person name="Barrell B.G."/>
        </authorList>
    </citation>
    <scope>NUCLEOTIDE SEQUENCE [LARGE SCALE GENOMIC DNA]</scope>
    <source>
        <strain>CT18</strain>
    </source>
</reference>
<reference key="2">
    <citation type="journal article" date="2003" name="J. Bacteriol.">
        <title>Comparative genomics of Salmonella enterica serovar Typhi strains Ty2 and CT18.</title>
        <authorList>
            <person name="Deng W."/>
            <person name="Liou S.-R."/>
            <person name="Plunkett G. III"/>
            <person name="Mayhew G.F."/>
            <person name="Rose D.J."/>
            <person name="Burland V."/>
            <person name="Kodoyianni V."/>
            <person name="Schwartz D.C."/>
            <person name="Blattner F.R."/>
        </authorList>
    </citation>
    <scope>NUCLEOTIDE SEQUENCE [LARGE SCALE GENOMIC DNA]</scope>
    <source>
        <strain>ATCC 700931 / Ty2</strain>
    </source>
</reference>
<comment type="function">
    <text evidence="1">Converts cobyric acid to cobinamide by the addition of aminopropanol on the F carboxylic group. However, the true cosubstrate could be (R)-1-amino-2-propanol O-2-phosphate, leading to cobinamide phosphate.</text>
</comment>
<comment type="pathway">
    <text evidence="1">Cofactor biosynthesis; adenosylcobalamin biosynthesis; adenosylcobalamin from cob(II)yrinate a,c-diamide: step 4/7.</text>
</comment>
<comment type="subcellular location">
    <subcellularLocation>
        <location evidence="1">Cell membrane</location>
        <topology evidence="1">Multi-pass membrane protein</topology>
    </subcellularLocation>
</comment>
<comment type="similarity">
    <text evidence="1">Belongs to the CobD/CbiB family.</text>
</comment>
<feature type="chain" id="PRO_0000150936" description="Cobalamin biosynthesis protein CbiB">
    <location>
        <begin position="1"/>
        <end position="319"/>
    </location>
</feature>
<feature type="transmembrane region" description="Helical" evidence="1">
    <location>
        <begin position="52"/>
        <end position="74"/>
    </location>
</feature>
<feature type="transmembrane region" description="Helical" evidence="1">
    <location>
        <begin position="79"/>
        <end position="101"/>
    </location>
</feature>
<feature type="transmembrane region" description="Helical" evidence="1">
    <location>
        <begin position="155"/>
        <end position="177"/>
    </location>
</feature>
<feature type="transmembrane region" description="Helical" evidence="1">
    <location>
        <begin position="207"/>
        <end position="229"/>
    </location>
</feature>
<feature type="transmembrane region" description="Helical" evidence="1">
    <location>
        <begin position="296"/>
        <end position="318"/>
    </location>
</feature>
<organism>
    <name type="scientific">Salmonella typhi</name>
    <dbReference type="NCBI Taxonomy" id="90370"/>
    <lineage>
        <taxon>Bacteria</taxon>
        <taxon>Pseudomonadati</taxon>
        <taxon>Pseudomonadota</taxon>
        <taxon>Gammaproteobacteria</taxon>
        <taxon>Enterobacterales</taxon>
        <taxon>Enterobacteriaceae</taxon>
        <taxon>Salmonella</taxon>
    </lineage>
</organism>
<gene>
    <name evidence="1" type="primary">cbiB</name>
    <name type="ordered locus">STY2239</name>
    <name type="ordered locus">t0839</name>
</gene>
<accession>Q8Z5M7</accession>
<name>CBIB_SALTI</name>
<proteinExistence type="inferred from homology"/>
<keyword id="KW-1003">Cell membrane</keyword>
<keyword id="KW-0169">Cobalamin biosynthesis</keyword>
<keyword id="KW-0472">Membrane</keyword>
<keyword id="KW-0812">Transmembrane</keyword>
<keyword id="KW-1133">Transmembrane helix</keyword>
<dbReference type="EMBL" id="AL513382">
    <property type="protein sequence ID" value="CAD02395.1"/>
    <property type="molecule type" value="Genomic_DNA"/>
</dbReference>
<dbReference type="EMBL" id="AE014613">
    <property type="protein sequence ID" value="AAO68528.1"/>
    <property type="molecule type" value="Genomic_DNA"/>
</dbReference>
<dbReference type="RefSeq" id="NP_456584.1">
    <property type="nucleotide sequence ID" value="NC_003198.1"/>
</dbReference>
<dbReference type="RefSeq" id="WP_000153666.1">
    <property type="nucleotide sequence ID" value="NZ_WSUR01000002.1"/>
</dbReference>
<dbReference type="STRING" id="220341.gene:17586150"/>
<dbReference type="KEGG" id="stt:t0839"/>
<dbReference type="KEGG" id="sty:STY2239"/>
<dbReference type="PATRIC" id="fig|220341.7.peg.2258"/>
<dbReference type="eggNOG" id="COG1270">
    <property type="taxonomic scope" value="Bacteria"/>
</dbReference>
<dbReference type="HOGENOM" id="CLU_054212_0_0_6"/>
<dbReference type="OMA" id="RWHPLVG"/>
<dbReference type="OrthoDB" id="9811967at2"/>
<dbReference type="UniPathway" id="UPA00148">
    <property type="reaction ID" value="UER00235"/>
</dbReference>
<dbReference type="Proteomes" id="UP000000541">
    <property type="component" value="Chromosome"/>
</dbReference>
<dbReference type="Proteomes" id="UP000002670">
    <property type="component" value="Chromosome"/>
</dbReference>
<dbReference type="GO" id="GO:0005886">
    <property type="term" value="C:plasma membrane"/>
    <property type="evidence" value="ECO:0007669"/>
    <property type="project" value="UniProtKB-SubCell"/>
</dbReference>
<dbReference type="GO" id="GO:0015420">
    <property type="term" value="F:ABC-type vitamin B12 transporter activity"/>
    <property type="evidence" value="ECO:0007669"/>
    <property type="project" value="UniProtKB-UniRule"/>
</dbReference>
<dbReference type="GO" id="GO:0048472">
    <property type="term" value="F:threonine-phosphate decarboxylase activity"/>
    <property type="evidence" value="ECO:0007669"/>
    <property type="project" value="InterPro"/>
</dbReference>
<dbReference type="GO" id="GO:0009236">
    <property type="term" value="P:cobalamin biosynthetic process"/>
    <property type="evidence" value="ECO:0007669"/>
    <property type="project" value="UniProtKB-UniRule"/>
</dbReference>
<dbReference type="HAMAP" id="MF_00024">
    <property type="entry name" value="CobD_CbiB"/>
    <property type="match status" value="1"/>
</dbReference>
<dbReference type="InterPro" id="IPR004485">
    <property type="entry name" value="Cobalamin_biosynth_CobD/CbiB"/>
</dbReference>
<dbReference type="NCBIfam" id="TIGR00380">
    <property type="entry name" value="cobal_cbiB"/>
    <property type="match status" value="1"/>
</dbReference>
<dbReference type="PANTHER" id="PTHR34308">
    <property type="entry name" value="COBALAMIN BIOSYNTHESIS PROTEIN CBIB"/>
    <property type="match status" value="1"/>
</dbReference>
<dbReference type="PANTHER" id="PTHR34308:SF1">
    <property type="entry name" value="COBALAMIN BIOSYNTHESIS PROTEIN CBIB"/>
    <property type="match status" value="1"/>
</dbReference>
<dbReference type="Pfam" id="PF03186">
    <property type="entry name" value="CobD_Cbib"/>
    <property type="match status" value="1"/>
</dbReference>
<evidence type="ECO:0000255" key="1">
    <source>
        <dbReference type="HAMAP-Rule" id="MF_00024"/>
    </source>
</evidence>